<reference key="1">
    <citation type="journal article" date="2007" name="PLoS Genet.">
        <title>Patterns and implications of gene gain and loss in the evolution of Prochlorococcus.</title>
        <authorList>
            <person name="Kettler G.C."/>
            <person name="Martiny A.C."/>
            <person name="Huang K."/>
            <person name="Zucker J."/>
            <person name="Coleman M.L."/>
            <person name="Rodrigue S."/>
            <person name="Chen F."/>
            <person name="Lapidus A."/>
            <person name="Ferriera S."/>
            <person name="Johnson J."/>
            <person name="Steglich C."/>
            <person name="Church G.M."/>
            <person name="Richardson P."/>
            <person name="Chisholm S.W."/>
        </authorList>
    </citation>
    <scope>NUCLEOTIDE SEQUENCE [LARGE SCALE GENOMIC DNA]</scope>
    <source>
        <strain>MIT 9303</strain>
    </source>
</reference>
<organism>
    <name type="scientific">Prochlorococcus marinus (strain MIT 9303)</name>
    <dbReference type="NCBI Taxonomy" id="59922"/>
    <lineage>
        <taxon>Bacteria</taxon>
        <taxon>Bacillati</taxon>
        <taxon>Cyanobacteriota</taxon>
        <taxon>Cyanophyceae</taxon>
        <taxon>Synechococcales</taxon>
        <taxon>Prochlorococcaceae</taxon>
        <taxon>Prochlorococcus</taxon>
    </lineage>
</organism>
<proteinExistence type="inferred from homology"/>
<keyword id="KW-0687">Ribonucleoprotein</keyword>
<keyword id="KW-0689">Ribosomal protein</keyword>
<keyword id="KW-0694">RNA-binding</keyword>
<keyword id="KW-0699">rRNA-binding</keyword>
<sequence length="218" mass="23168">MSIGILGKKLGMSQFFDDQGRAIPVTLIEAGPCRITQLKTSDIDGYAAVQIGFGDTREKLINKPSKGHLTKSGEVLLKHLREYRVEGLEGLELGAAITVGSFEAGQKVDVSGDTMGRGFSGYQKRHGFSRGPMSHGSKNHREPGSTGAGTTPGRIYPGKRMAGRYGGKKRTTRGLTILKVDSNRNLLVVKGSVPGKPGALLNIRPAKRVGSKPAQGGK</sequence>
<gene>
    <name evidence="1" type="primary">rplC</name>
    <name evidence="1" type="synonym">rpl3</name>
    <name type="ordered locus">P9303_23021</name>
</gene>
<comment type="function">
    <text evidence="1">One of the primary rRNA binding proteins, it binds directly near the 3'-end of the 23S rRNA, where it nucleates assembly of the 50S subunit.</text>
</comment>
<comment type="subunit">
    <text evidence="1">Part of the 50S ribosomal subunit. Forms a cluster with proteins L14 and L19.</text>
</comment>
<comment type="similarity">
    <text evidence="1">Belongs to the universal ribosomal protein uL3 family.</text>
</comment>
<feature type="chain" id="PRO_1000052108" description="Large ribosomal subunit protein uL3">
    <location>
        <begin position="1"/>
        <end position="218"/>
    </location>
</feature>
<feature type="region of interest" description="Disordered" evidence="2">
    <location>
        <begin position="127"/>
        <end position="167"/>
    </location>
</feature>
<name>RL3_PROM3</name>
<protein>
    <recommendedName>
        <fullName evidence="1">Large ribosomal subunit protein uL3</fullName>
    </recommendedName>
    <alternativeName>
        <fullName evidence="3">50S ribosomal protein L3</fullName>
    </alternativeName>
</protein>
<evidence type="ECO:0000255" key="1">
    <source>
        <dbReference type="HAMAP-Rule" id="MF_01325"/>
    </source>
</evidence>
<evidence type="ECO:0000256" key="2">
    <source>
        <dbReference type="SAM" id="MobiDB-lite"/>
    </source>
</evidence>
<evidence type="ECO:0000305" key="3"/>
<dbReference type="EMBL" id="CP000554">
    <property type="protein sequence ID" value="ABM79037.1"/>
    <property type="molecule type" value="Genomic_DNA"/>
</dbReference>
<dbReference type="RefSeq" id="WP_011826905.1">
    <property type="nucleotide sequence ID" value="NC_008820.1"/>
</dbReference>
<dbReference type="SMR" id="A2CC27"/>
<dbReference type="STRING" id="59922.P9303_23021"/>
<dbReference type="KEGG" id="pmf:P9303_23021"/>
<dbReference type="HOGENOM" id="CLU_044142_4_1_3"/>
<dbReference type="BioCyc" id="PMAR59922:G1G80-2019-MONOMER"/>
<dbReference type="Proteomes" id="UP000002274">
    <property type="component" value="Chromosome"/>
</dbReference>
<dbReference type="GO" id="GO:0022625">
    <property type="term" value="C:cytosolic large ribosomal subunit"/>
    <property type="evidence" value="ECO:0007669"/>
    <property type="project" value="TreeGrafter"/>
</dbReference>
<dbReference type="GO" id="GO:0019843">
    <property type="term" value="F:rRNA binding"/>
    <property type="evidence" value="ECO:0007669"/>
    <property type="project" value="UniProtKB-UniRule"/>
</dbReference>
<dbReference type="GO" id="GO:0003735">
    <property type="term" value="F:structural constituent of ribosome"/>
    <property type="evidence" value="ECO:0007669"/>
    <property type="project" value="InterPro"/>
</dbReference>
<dbReference type="GO" id="GO:0006412">
    <property type="term" value="P:translation"/>
    <property type="evidence" value="ECO:0007669"/>
    <property type="project" value="UniProtKB-UniRule"/>
</dbReference>
<dbReference type="FunFam" id="3.30.160.810:FF:000001">
    <property type="entry name" value="50S ribosomal protein L3"/>
    <property type="match status" value="1"/>
</dbReference>
<dbReference type="FunFam" id="2.40.30.10:FF:000065">
    <property type="entry name" value="50S ribosomal protein L3, chloroplastic"/>
    <property type="match status" value="1"/>
</dbReference>
<dbReference type="Gene3D" id="3.30.160.810">
    <property type="match status" value="1"/>
</dbReference>
<dbReference type="Gene3D" id="2.40.30.10">
    <property type="entry name" value="Translation factors"/>
    <property type="match status" value="1"/>
</dbReference>
<dbReference type="HAMAP" id="MF_01325_B">
    <property type="entry name" value="Ribosomal_uL3_B"/>
    <property type="match status" value="1"/>
</dbReference>
<dbReference type="InterPro" id="IPR000597">
    <property type="entry name" value="Ribosomal_uL3"/>
</dbReference>
<dbReference type="InterPro" id="IPR019927">
    <property type="entry name" value="Ribosomal_uL3_bac/org-type"/>
</dbReference>
<dbReference type="InterPro" id="IPR019926">
    <property type="entry name" value="Ribosomal_uL3_CS"/>
</dbReference>
<dbReference type="InterPro" id="IPR009000">
    <property type="entry name" value="Transl_B-barrel_sf"/>
</dbReference>
<dbReference type="NCBIfam" id="TIGR03625">
    <property type="entry name" value="L3_bact"/>
    <property type="match status" value="1"/>
</dbReference>
<dbReference type="PANTHER" id="PTHR11229">
    <property type="entry name" value="50S RIBOSOMAL PROTEIN L3"/>
    <property type="match status" value="1"/>
</dbReference>
<dbReference type="PANTHER" id="PTHR11229:SF16">
    <property type="entry name" value="LARGE RIBOSOMAL SUBUNIT PROTEIN UL3C"/>
    <property type="match status" value="1"/>
</dbReference>
<dbReference type="Pfam" id="PF00297">
    <property type="entry name" value="Ribosomal_L3"/>
    <property type="match status" value="1"/>
</dbReference>
<dbReference type="SUPFAM" id="SSF50447">
    <property type="entry name" value="Translation proteins"/>
    <property type="match status" value="1"/>
</dbReference>
<dbReference type="PROSITE" id="PS00474">
    <property type="entry name" value="RIBOSOMAL_L3"/>
    <property type="match status" value="1"/>
</dbReference>
<accession>A2CC27</accession>